<dbReference type="EC" id="6.3.3.3" evidence="1"/>
<dbReference type="EMBL" id="AM040265">
    <property type="protein sequence ID" value="CAJ12912.1"/>
    <property type="molecule type" value="Genomic_DNA"/>
</dbReference>
<dbReference type="RefSeq" id="WP_002966138.1">
    <property type="nucleotide sequence ID" value="NZ_KN046823.1"/>
</dbReference>
<dbReference type="SMR" id="Q2YKB6"/>
<dbReference type="STRING" id="359391.BAB2_0746"/>
<dbReference type="GeneID" id="93015379"/>
<dbReference type="KEGG" id="bmf:BAB2_0746"/>
<dbReference type="PATRIC" id="fig|359391.11.peg.439"/>
<dbReference type="HOGENOM" id="CLU_072551_2_0_5"/>
<dbReference type="PhylomeDB" id="Q2YKB6"/>
<dbReference type="UniPathway" id="UPA00078">
    <property type="reaction ID" value="UER00161"/>
</dbReference>
<dbReference type="Proteomes" id="UP000002719">
    <property type="component" value="Chromosome II"/>
</dbReference>
<dbReference type="GO" id="GO:0005829">
    <property type="term" value="C:cytosol"/>
    <property type="evidence" value="ECO:0007669"/>
    <property type="project" value="TreeGrafter"/>
</dbReference>
<dbReference type="GO" id="GO:0005524">
    <property type="term" value="F:ATP binding"/>
    <property type="evidence" value="ECO:0007669"/>
    <property type="project" value="UniProtKB-UniRule"/>
</dbReference>
<dbReference type="GO" id="GO:0004141">
    <property type="term" value="F:dethiobiotin synthase activity"/>
    <property type="evidence" value="ECO:0007669"/>
    <property type="project" value="UniProtKB-UniRule"/>
</dbReference>
<dbReference type="GO" id="GO:0000287">
    <property type="term" value="F:magnesium ion binding"/>
    <property type="evidence" value="ECO:0007669"/>
    <property type="project" value="UniProtKB-UniRule"/>
</dbReference>
<dbReference type="GO" id="GO:0009102">
    <property type="term" value="P:biotin biosynthetic process"/>
    <property type="evidence" value="ECO:0007669"/>
    <property type="project" value="UniProtKB-UniRule"/>
</dbReference>
<dbReference type="CDD" id="cd03109">
    <property type="entry name" value="DTBS"/>
    <property type="match status" value="1"/>
</dbReference>
<dbReference type="Gene3D" id="3.40.50.300">
    <property type="entry name" value="P-loop containing nucleotide triphosphate hydrolases"/>
    <property type="match status" value="1"/>
</dbReference>
<dbReference type="HAMAP" id="MF_00336">
    <property type="entry name" value="BioD"/>
    <property type="match status" value="1"/>
</dbReference>
<dbReference type="InterPro" id="IPR004472">
    <property type="entry name" value="DTB_synth_BioD"/>
</dbReference>
<dbReference type="InterPro" id="IPR027417">
    <property type="entry name" value="P-loop_NTPase"/>
</dbReference>
<dbReference type="NCBIfam" id="TIGR00347">
    <property type="entry name" value="bioD"/>
    <property type="match status" value="1"/>
</dbReference>
<dbReference type="PANTHER" id="PTHR43210:SF2">
    <property type="entry name" value="ATP-DEPENDENT DETHIOBIOTIN SYNTHETASE BIOD 2"/>
    <property type="match status" value="1"/>
</dbReference>
<dbReference type="PANTHER" id="PTHR43210">
    <property type="entry name" value="DETHIOBIOTIN SYNTHETASE"/>
    <property type="match status" value="1"/>
</dbReference>
<dbReference type="Pfam" id="PF13500">
    <property type="entry name" value="AAA_26"/>
    <property type="match status" value="1"/>
</dbReference>
<dbReference type="PIRSF" id="PIRSF006755">
    <property type="entry name" value="DTB_synth"/>
    <property type="match status" value="1"/>
</dbReference>
<dbReference type="SUPFAM" id="SSF52540">
    <property type="entry name" value="P-loop containing nucleoside triphosphate hydrolases"/>
    <property type="match status" value="1"/>
</dbReference>
<proteinExistence type="inferred from homology"/>
<reference key="1">
    <citation type="journal article" date="2005" name="Infect. Immun.">
        <title>Whole-genome analyses of speciation events in pathogenic Brucellae.</title>
        <authorList>
            <person name="Chain P.S."/>
            <person name="Comerci D.J."/>
            <person name="Tolmasky M.E."/>
            <person name="Larimer F.W."/>
            <person name="Malfatti S.A."/>
            <person name="Vergez L.M."/>
            <person name="Aguero F."/>
            <person name="Land M.L."/>
            <person name="Ugalde R.A."/>
            <person name="Garcia E."/>
        </authorList>
    </citation>
    <scope>NUCLEOTIDE SEQUENCE [LARGE SCALE GENOMIC DNA]</scope>
    <source>
        <strain>2308</strain>
    </source>
</reference>
<sequence>MNSRLIVTGTDTGIGKTVFSAALCHALGAVYWKPVQSGLEEETDSEIVARLAQASPQRILPEAWRLNTPASPHLSARLDGVEIRPEEMHIPATSLPLVIEGAGGLLVPLNDKTLFADLFAIWRIPAILCARAALGTINHTLLSLEAMRSRDIPVLGVAFISEANEDTETTIAHLGRVKRLGRLPLLDDLSPEKLHHSFARNFHIDDFAGVAR</sequence>
<keyword id="KW-0067">ATP-binding</keyword>
<keyword id="KW-0093">Biotin biosynthesis</keyword>
<keyword id="KW-0963">Cytoplasm</keyword>
<keyword id="KW-0436">Ligase</keyword>
<keyword id="KW-0460">Magnesium</keyword>
<keyword id="KW-0479">Metal-binding</keyword>
<keyword id="KW-0547">Nucleotide-binding</keyword>
<keyword id="KW-1185">Reference proteome</keyword>
<accession>Q2YKB6</accession>
<protein>
    <recommendedName>
        <fullName evidence="1">ATP-dependent dethiobiotin synthetase BioD</fullName>
        <ecNumber evidence="1">6.3.3.3</ecNumber>
    </recommendedName>
    <alternativeName>
        <fullName evidence="1">DTB synthetase</fullName>
        <shortName evidence="1">DTBS</shortName>
    </alternativeName>
    <alternativeName>
        <fullName evidence="1">Dethiobiotin synthase</fullName>
    </alternativeName>
</protein>
<organism>
    <name type="scientific">Brucella abortus (strain 2308)</name>
    <dbReference type="NCBI Taxonomy" id="359391"/>
    <lineage>
        <taxon>Bacteria</taxon>
        <taxon>Pseudomonadati</taxon>
        <taxon>Pseudomonadota</taxon>
        <taxon>Alphaproteobacteria</taxon>
        <taxon>Hyphomicrobiales</taxon>
        <taxon>Brucellaceae</taxon>
        <taxon>Brucella/Ochrobactrum group</taxon>
        <taxon>Brucella</taxon>
    </lineage>
</organism>
<feature type="chain" id="PRO_0000302485" description="ATP-dependent dethiobiotin synthetase BioD">
    <location>
        <begin position="1"/>
        <end position="212"/>
    </location>
</feature>
<feature type="active site" evidence="1">
    <location>
        <position position="33"/>
    </location>
</feature>
<feature type="binding site" evidence="1">
    <location>
        <begin position="13"/>
        <end position="18"/>
    </location>
    <ligand>
        <name>ATP</name>
        <dbReference type="ChEBI" id="CHEBI:30616"/>
    </ligand>
</feature>
<feature type="binding site" evidence="1">
    <location>
        <position position="17"/>
    </location>
    <ligand>
        <name>Mg(2+)</name>
        <dbReference type="ChEBI" id="CHEBI:18420"/>
    </ligand>
</feature>
<feature type="binding site" evidence="1">
    <location>
        <position position="37"/>
    </location>
    <ligand>
        <name>substrate</name>
    </ligand>
</feature>
<feature type="binding site" evidence="1">
    <location>
        <begin position="100"/>
        <end position="103"/>
    </location>
    <ligand>
        <name>ATP</name>
        <dbReference type="ChEBI" id="CHEBI:30616"/>
    </ligand>
</feature>
<feature type="binding site" evidence="1">
    <location>
        <position position="100"/>
    </location>
    <ligand>
        <name>Mg(2+)</name>
        <dbReference type="ChEBI" id="CHEBI:18420"/>
    </ligand>
</feature>
<feature type="binding site" evidence="1">
    <location>
        <begin position="160"/>
        <end position="161"/>
    </location>
    <ligand>
        <name>ATP</name>
        <dbReference type="ChEBI" id="CHEBI:30616"/>
    </ligand>
</feature>
<feature type="binding site" evidence="1">
    <location>
        <begin position="184"/>
        <end position="186"/>
    </location>
    <ligand>
        <name>ATP</name>
        <dbReference type="ChEBI" id="CHEBI:30616"/>
    </ligand>
</feature>
<comment type="function">
    <text evidence="1">Catalyzes a mechanistically unusual reaction, the ATP-dependent insertion of CO2 between the N7 and N8 nitrogen atoms of 7,8-diaminopelargonic acid (DAPA, also called 7,8-diammoniononanoate) to form a ureido ring.</text>
</comment>
<comment type="catalytic activity">
    <reaction evidence="1">
        <text>(7R,8S)-7,8-diammoniononanoate + CO2 + ATP = (4R,5S)-dethiobiotin + ADP + phosphate + 3 H(+)</text>
        <dbReference type="Rhea" id="RHEA:15805"/>
        <dbReference type="ChEBI" id="CHEBI:15378"/>
        <dbReference type="ChEBI" id="CHEBI:16526"/>
        <dbReference type="ChEBI" id="CHEBI:30616"/>
        <dbReference type="ChEBI" id="CHEBI:43474"/>
        <dbReference type="ChEBI" id="CHEBI:149469"/>
        <dbReference type="ChEBI" id="CHEBI:149473"/>
        <dbReference type="ChEBI" id="CHEBI:456216"/>
        <dbReference type="EC" id="6.3.3.3"/>
    </reaction>
</comment>
<comment type="cofactor">
    <cofactor evidence="1">
        <name>Mg(2+)</name>
        <dbReference type="ChEBI" id="CHEBI:18420"/>
    </cofactor>
</comment>
<comment type="pathway">
    <text evidence="1">Cofactor biosynthesis; biotin biosynthesis; biotin from 7,8-diaminononanoate: step 1/2.</text>
</comment>
<comment type="subunit">
    <text evidence="1">Homodimer.</text>
</comment>
<comment type="subcellular location">
    <subcellularLocation>
        <location evidence="1">Cytoplasm</location>
    </subcellularLocation>
</comment>
<comment type="similarity">
    <text evidence="1">Belongs to the dethiobiotin synthetase family.</text>
</comment>
<name>BIOD_BRUA2</name>
<gene>
    <name evidence="1" type="primary">bioD</name>
    <name type="ordered locus">BAB2_0746</name>
</gene>
<evidence type="ECO:0000255" key="1">
    <source>
        <dbReference type="HAMAP-Rule" id="MF_00336"/>
    </source>
</evidence>